<accession>Q979S2</accession>
<reference key="1">
    <citation type="journal article" date="2000" name="Proc. Natl. Acad. Sci. U.S.A.">
        <title>Archaeal adaptation to higher temperatures revealed by genomic sequence of Thermoplasma volcanium.</title>
        <authorList>
            <person name="Kawashima T."/>
            <person name="Amano N."/>
            <person name="Koike H."/>
            <person name="Makino S."/>
            <person name="Higuchi S."/>
            <person name="Kawashima-Ohya Y."/>
            <person name="Watanabe K."/>
            <person name="Yamazaki M."/>
            <person name="Kanehori K."/>
            <person name="Kawamoto T."/>
            <person name="Nunoshiba T."/>
            <person name="Yamamoto Y."/>
            <person name="Aramaki H."/>
            <person name="Makino K."/>
            <person name="Suzuki M."/>
        </authorList>
    </citation>
    <scope>NUCLEOTIDE SEQUENCE [LARGE SCALE GENOMIC DNA]</scope>
    <source>
        <strain>ATCC 51530 / DSM 4299 / JCM 9571 / NBRC 15438 / GSS1</strain>
    </source>
</reference>
<proteinExistence type="inferred from homology"/>
<gene>
    <name evidence="1" type="primary">pcn</name>
    <name type="ordered locus">TV1088</name>
    <name type="ORF">TVG1118724</name>
</gene>
<organism>
    <name type="scientific">Thermoplasma volcanium (strain ATCC 51530 / DSM 4299 / JCM 9571 / NBRC 15438 / GSS1)</name>
    <dbReference type="NCBI Taxonomy" id="273116"/>
    <lineage>
        <taxon>Archaea</taxon>
        <taxon>Methanobacteriati</taxon>
        <taxon>Thermoplasmatota</taxon>
        <taxon>Thermoplasmata</taxon>
        <taxon>Thermoplasmatales</taxon>
        <taxon>Thermoplasmataceae</taxon>
        <taxon>Thermoplasma</taxon>
    </lineage>
</organism>
<keyword id="KW-0235">DNA replication</keyword>
<keyword id="KW-0238">DNA-binding</keyword>
<protein>
    <recommendedName>
        <fullName evidence="1">DNA polymerase sliding clamp</fullName>
    </recommendedName>
    <alternativeName>
        <fullName evidence="1">Proliferating cell nuclear antigen homolog</fullName>
        <shortName evidence="1">PCNA</shortName>
    </alternativeName>
</protein>
<comment type="function">
    <text evidence="1">Sliding clamp subunit that acts as a moving platform for DNA processing. Responsible for tethering the catalytic subunit of DNA polymerase and other proteins to DNA during high-speed replication.</text>
</comment>
<comment type="subunit">
    <text evidence="1">Homotrimer. The subunits circularize to form a toroid; DNA passes through its center. Replication factor C (RFC) is required to load the toroid on the DNA.</text>
</comment>
<comment type="similarity">
    <text evidence="1">Belongs to the PCNA family.</text>
</comment>
<comment type="sequence caution" evidence="2">
    <conflict type="erroneous initiation">
        <sequence resource="EMBL-CDS" id="BAB60230"/>
    </conflict>
    <text>Extended N-terminus.</text>
</comment>
<sequence length="246" mass="27558">MIRMNISVRNLKEITDLLSTIVSEAKFKVDENGMSVTAVDPAHVAMIRLEVPKEVFSEFRSDGTEEIALDIDRLKSVIRLANSSENVGITKDKEKLKFDLGNISKSVSLLDPSTIVTPKIPNIASEYYAIIKRSDFERGLRAAEDISDSIRFVLSSEGFRATSHSESEESEMVLPKDMLSDLSCSDTIKSSYPLEYLLKFIKAVSSADSLKISFRDDYPLSIEFYLDQNPSAKIKGLFLLAPRMEQ</sequence>
<name>PCNA_THEVO</name>
<dbReference type="EMBL" id="BA000011">
    <property type="protein sequence ID" value="BAB60230.1"/>
    <property type="status" value="ALT_INIT"/>
    <property type="molecule type" value="Genomic_DNA"/>
</dbReference>
<dbReference type="RefSeq" id="WP_010917320.1">
    <property type="nucleotide sequence ID" value="NC_002689.2"/>
</dbReference>
<dbReference type="SMR" id="Q979S2"/>
<dbReference type="STRING" id="273116.gene:9381885"/>
<dbReference type="PaxDb" id="273116-14325326"/>
<dbReference type="DNASU" id="1441202"/>
<dbReference type="GeneID" id="1441202"/>
<dbReference type="KEGG" id="tvo:TVG1118724"/>
<dbReference type="eggNOG" id="arCOG00488">
    <property type="taxonomic scope" value="Archaea"/>
</dbReference>
<dbReference type="HOGENOM" id="CLU_043978_1_1_2"/>
<dbReference type="OrthoDB" id="14749at2157"/>
<dbReference type="PhylomeDB" id="Q979S2"/>
<dbReference type="Proteomes" id="UP000001017">
    <property type="component" value="Chromosome"/>
</dbReference>
<dbReference type="GO" id="GO:0003677">
    <property type="term" value="F:DNA binding"/>
    <property type="evidence" value="ECO:0007669"/>
    <property type="project" value="UniProtKB-UniRule"/>
</dbReference>
<dbReference type="GO" id="GO:0030337">
    <property type="term" value="F:DNA polymerase processivity factor activity"/>
    <property type="evidence" value="ECO:0007669"/>
    <property type="project" value="UniProtKB-UniRule"/>
</dbReference>
<dbReference type="GO" id="GO:0006272">
    <property type="term" value="P:leading strand elongation"/>
    <property type="evidence" value="ECO:0007669"/>
    <property type="project" value="TreeGrafter"/>
</dbReference>
<dbReference type="GO" id="GO:0006275">
    <property type="term" value="P:regulation of DNA replication"/>
    <property type="evidence" value="ECO:0007669"/>
    <property type="project" value="UniProtKB-UniRule"/>
</dbReference>
<dbReference type="CDD" id="cd00577">
    <property type="entry name" value="PCNA"/>
    <property type="match status" value="1"/>
</dbReference>
<dbReference type="Gene3D" id="3.70.10.10">
    <property type="match status" value="1"/>
</dbReference>
<dbReference type="HAMAP" id="MF_00317">
    <property type="entry name" value="DNApol_clamp_arch"/>
    <property type="match status" value="1"/>
</dbReference>
<dbReference type="InterPro" id="IPR046938">
    <property type="entry name" value="DNA_clamp_sf"/>
</dbReference>
<dbReference type="InterPro" id="IPR000730">
    <property type="entry name" value="Pr_cel_nuc_antig"/>
</dbReference>
<dbReference type="InterPro" id="IPR022649">
    <property type="entry name" value="Pr_cel_nuc_antig_C"/>
</dbReference>
<dbReference type="InterPro" id="IPR022659">
    <property type="entry name" value="Pr_cel_nuc_antig_CS"/>
</dbReference>
<dbReference type="InterPro" id="IPR022648">
    <property type="entry name" value="Pr_cel_nuc_antig_N"/>
</dbReference>
<dbReference type="NCBIfam" id="NF002222">
    <property type="entry name" value="PRK01115.1-5"/>
    <property type="match status" value="1"/>
</dbReference>
<dbReference type="PANTHER" id="PTHR11352">
    <property type="entry name" value="PROLIFERATING CELL NUCLEAR ANTIGEN"/>
    <property type="match status" value="1"/>
</dbReference>
<dbReference type="PANTHER" id="PTHR11352:SF0">
    <property type="entry name" value="PROLIFERATING CELL NUCLEAR ANTIGEN"/>
    <property type="match status" value="1"/>
</dbReference>
<dbReference type="Pfam" id="PF02747">
    <property type="entry name" value="PCNA_C"/>
    <property type="match status" value="1"/>
</dbReference>
<dbReference type="Pfam" id="PF00705">
    <property type="entry name" value="PCNA_N"/>
    <property type="match status" value="1"/>
</dbReference>
<dbReference type="PRINTS" id="PR00339">
    <property type="entry name" value="PCNACYCLIN"/>
</dbReference>
<dbReference type="SUPFAM" id="SSF55979">
    <property type="entry name" value="DNA clamp"/>
    <property type="match status" value="2"/>
</dbReference>
<dbReference type="PROSITE" id="PS01251">
    <property type="entry name" value="PCNA_1"/>
    <property type="match status" value="1"/>
</dbReference>
<feature type="chain" id="PRO_0000149222" description="DNA polymerase sliding clamp">
    <location>
        <begin position="1"/>
        <end position="246"/>
    </location>
</feature>
<evidence type="ECO:0000255" key="1">
    <source>
        <dbReference type="HAMAP-Rule" id="MF_00317"/>
    </source>
</evidence>
<evidence type="ECO:0000305" key="2"/>